<organism>
    <name type="scientific">Bos taurus</name>
    <name type="common">Bovine</name>
    <dbReference type="NCBI Taxonomy" id="9913"/>
    <lineage>
        <taxon>Eukaryota</taxon>
        <taxon>Metazoa</taxon>
        <taxon>Chordata</taxon>
        <taxon>Craniata</taxon>
        <taxon>Vertebrata</taxon>
        <taxon>Euteleostomi</taxon>
        <taxon>Mammalia</taxon>
        <taxon>Eutheria</taxon>
        <taxon>Laurasiatheria</taxon>
        <taxon>Artiodactyla</taxon>
        <taxon>Ruminantia</taxon>
        <taxon>Pecora</taxon>
        <taxon>Bovidae</taxon>
        <taxon>Bovinae</taxon>
        <taxon>Bos</taxon>
    </lineage>
</organism>
<gene>
    <name type="primary">CRIPT</name>
</gene>
<name>CRIPT_BOVIN</name>
<comment type="function">
    <text evidence="2 3">As a component of the minor spliceosome, involved in the splicing of U12-type introns in pre-mRNAs (By similarity). Involved in the cytoskeletal anchoring of DLG4 in excitatory synapses.</text>
</comment>
<comment type="subunit">
    <text evidence="1 3 4">Component of the minor spliceosome. Within this complex, interacts with RNF113A, as well as with SF3B1/SF3b155, SF3B2/SF3b145 and PHF5A/SF3b14b (By similarity). Interacts with TUBB1. Interacts strongly with the PDZ3 domain of members of the DLG4 family. Associates with microtubules (By similarity). Interacts with DLG4.</text>
</comment>
<comment type="subcellular location">
    <subcellularLocation>
        <location evidence="1">Cytoplasm</location>
    </subcellularLocation>
    <subcellularLocation>
        <location evidence="1">Synapse</location>
    </subcellularLocation>
    <subcellularLocation>
        <location evidence="1">Cell projection</location>
        <location evidence="1">Dendritic spine</location>
    </subcellularLocation>
    <text evidence="1">Colocalizes with DLG4 in asymmetric synapses.</text>
</comment>
<comment type="similarity">
    <text evidence="5">Belongs to the CRIPT family.</text>
</comment>
<sequence length="101" mass="11216">MVCEKCEKKLGTVITPDTWKDGARNTTESGGRKLNENKALTSKKARFDPYGKNKFSTCRICKSSVHQPGSHYCQGCAYKKGICAMCGKKVLDTKNYKQTSV</sequence>
<proteinExistence type="evidence at protein level"/>
<feature type="chain" id="PRO_0000314562" description="Cysteine-rich PDZ-binding protein">
    <location>
        <begin position="1"/>
        <end position="101"/>
    </location>
</feature>
<feature type="region of interest" description="Sufficient for interaction with DLG4" evidence="4">
    <location>
        <begin position="95"/>
        <end position="101"/>
    </location>
</feature>
<feature type="region of interest" description="PDZ3-binding">
    <location>
        <begin position="98"/>
        <end position="101"/>
    </location>
</feature>
<accession>Q3ZC66</accession>
<dbReference type="EMBL" id="BC102887">
    <property type="protein sequence ID" value="AAI02888.1"/>
    <property type="molecule type" value="mRNA"/>
</dbReference>
<dbReference type="RefSeq" id="NP_001029975.1">
    <property type="nucleotide sequence ID" value="NM_001034803.2"/>
</dbReference>
<dbReference type="SMR" id="Q3ZC66"/>
<dbReference type="FunCoup" id="Q3ZC66">
    <property type="interactions" value="1408"/>
</dbReference>
<dbReference type="STRING" id="9913.ENSBTAP00000020872"/>
<dbReference type="PaxDb" id="9913-ENSBTAP00000020872"/>
<dbReference type="Ensembl" id="ENSBTAT00000020872.5">
    <property type="protein sequence ID" value="ENSBTAP00000020872.3"/>
    <property type="gene ID" value="ENSBTAG00000015723.5"/>
</dbReference>
<dbReference type="GeneID" id="617723"/>
<dbReference type="KEGG" id="bta:617723"/>
<dbReference type="CTD" id="9419"/>
<dbReference type="VEuPathDB" id="HostDB:ENSBTAG00000015723"/>
<dbReference type="VGNC" id="VGNC:27712">
    <property type="gene designation" value="CRIPT"/>
</dbReference>
<dbReference type="eggNOG" id="KOG3476">
    <property type="taxonomic scope" value="Eukaryota"/>
</dbReference>
<dbReference type="GeneTree" id="ENSGT00950000183100"/>
<dbReference type="HOGENOM" id="CLU_133934_0_0_1"/>
<dbReference type="InParanoid" id="Q3ZC66"/>
<dbReference type="OMA" id="MPCDKCE"/>
<dbReference type="OrthoDB" id="147332at2759"/>
<dbReference type="TreeFam" id="TF300144"/>
<dbReference type="Proteomes" id="UP000009136">
    <property type="component" value="Chromosome 11"/>
</dbReference>
<dbReference type="Bgee" id="ENSBTAG00000015723">
    <property type="expression patterns" value="Expressed in oocyte and 105 other cell types or tissues"/>
</dbReference>
<dbReference type="GO" id="GO:0005737">
    <property type="term" value="C:cytoplasm"/>
    <property type="evidence" value="ECO:0007669"/>
    <property type="project" value="UniProtKB-SubCell"/>
</dbReference>
<dbReference type="GO" id="GO:0030425">
    <property type="term" value="C:dendrite"/>
    <property type="evidence" value="ECO:0000250"/>
    <property type="project" value="UniProtKB"/>
</dbReference>
<dbReference type="GO" id="GO:0043198">
    <property type="term" value="C:dendritic shaft"/>
    <property type="evidence" value="ECO:0000250"/>
    <property type="project" value="UniProtKB"/>
</dbReference>
<dbReference type="GO" id="GO:0043197">
    <property type="term" value="C:dendritic spine"/>
    <property type="evidence" value="ECO:0000250"/>
    <property type="project" value="UniProtKB"/>
</dbReference>
<dbReference type="GO" id="GO:0043025">
    <property type="term" value="C:neuronal cell body"/>
    <property type="evidence" value="ECO:0000250"/>
    <property type="project" value="UniProtKB"/>
</dbReference>
<dbReference type="GO" id="GO:0014069">
    <property type="term" value="C:postsynaptic density"/>
    <property type="evidence" value="ECO:0000250"/>
    <property type="project" value="UniProtKB"/>
</dbReference>
<dbReference type="GO" id="GO:0005681">
    <property type="term" value="C:spliceosomal complex"/>
    <property type="evidence" value="ECO:0007669"/>
    <property type="project" value="UniProtKB-KW"/>
</dbReference>
<dbReference type="GO" id="GO:0008017">
    <property type="term" value="F:microtubule binding"/>
    <property type="evidence" value="ECO:0000250"/>
    <property type="project" value="CAFA"/>
</dbReference>
<dbReference type="GO" id="GO:0030165">
    <property type="term" value="F:PDZ domain binding"/>
    <property type="evidence" value="ECO:0000250"/>
    <property type="project" value="UniProtKB"/>
</dbReference>
<dbReference type="GO" id="GO:0044877">
    <property type="term" value="F:protein-containing complex binding"/>
    <property type="evidence" value="ECO:0000250"/>
    <property type="project" value="UniProtKB"/>
</dbReference>
<dbReference type="GO" id="GO:0097110">
    <property type="term" value="F:scaffold protein binding"/>
    <property type="evidence" value="ECO:0007669"/>
    <property type="project" value="Ensembl"/>
</dbReference>
<dbReference type="GO" id="GO:0031122">
    <property type="term" value="P:cytoplasmic microtubule organization"/>
    <property type="evidence" value="ECO:0000250"/>
    <property type="project" value="UniProtKB"/>
</dbReference>
<dbReference type="GO" id="GO:0006397">
    <property type="term" value="P:mRNA processing"/>
    <property type="evidence" value="ECO:0007669"/>
    <property type="project" value="UniProtKB-KW"/>
</dbReference>
<dbReference type="GO" id="GO:0035372">
    <property type="term" value="P:protein localization to microtubule"/>
    <property type="evidence" value="ECO:0000250"/>
    <property type="project" value="CAFA"/>
</dbReference>
<dbReference type="GO" id="GO:1902897">
    <property type="term" value="P:regulation of postsynaptic density protein 95 clustering"/>
    <property type="evidence" value="ECO:0000250"/>
    <property type="project" value="CAFA"/>
</dbReference>
<dbReference type="GO" id="GO:0008380">
    <property type="term" value="P:RNA splicing"/>
    <property type="evidence" value="ECO:0007669"/>
    <property type="project" value="UniProtKB-KW"/>
</dbReference>
<dbReference type="InterPro" id="IPR019367">
    <property type="entry name" value="PDZ-binding_CRIPT"/>
</dbReference>
<dbReference type="PANTHER" id="PTHR11805">
    <property type="entry name" value="CYSTEINE-RICH PDZ-BINDING PROTEIN"/>
    <property type="match status" value="1"/>
</dbReference>
<dbReference type="PANTHER" id="PTHR11805:SF1">
    <property type="entry name" value="CYSTEINE-RICH PDZ-BINDING PROTEIN"/>
    <property type="match status" value="1"/>
</dbReference>
<dbReference type="Pfam" id="PF10235">
    <property type="entry name" value="Cript"/>
    <property type="match status" value="1"/>
</dbReference>
<reference key="1">
    <citation type="submission" date="2005-08" db="EMBL/GenBank/DDBJ databases">
        <authorList>
            <consortium name="NIH - Mammalian Gene Collection (MGC) project"/>
        </authorList>
    </citation>
    <scope>NUCLEOTIDE SEQUENCE [LARGE SCALE MRNA]</scope>
    <source>
        <strain>Crossbred X Angus</strain>
        <tissue>Ileum</tissue>
    </source>
</reference>
<reference key="2">
    <citation type="journal article" date="2007" name="Biochemistry">
        <title>A thermodynamic ligand binding study of the third PDZ domain (PDZ3) from the mammalian neuronal protein PSD-95.</title>
        <authorList>
            <person name="Saro D."/>
            <person name="Li T."/>
            <person name="Rupasinghe C."/>
            <person name="Paredes A."/>
            <person name="Caspers N."/>
            <person name="Spaller M.R."/>
        </authorList>
    </citation>
    <scope>INTERACTION WITH DLG4</scope>
</reference>
<keyword id="KW-0966">Cell projection</keyword>
<keyword id="KW-0963">Cytoplasm</keyword>
<keyword id="KW-0507">mRNA processing</keyword>
<keyword id="KW-0508">mRNA splicing</keyword>
<keyword id="KW-1185">Reference proteome</keyword>
<keyword id="KW-0747">Spliceosome</keyword>
<keyword id="KW-0770">Synapse</keyword>
<evidence type="ECO:0000250" key="1"/>
<evidence type="ECO:0000250" key="2">
    <source>
        <dbReference type="UniProtKB" id="Q792Q4"/>
    </source>
</evidence>
<evidence type="ECO:0000250" key="3">
    <source>
        <dbReference type="UniProtKB" id="Q9P021"/>
    </source>
</evidence>
<evidence type="ECO:0000269" key="4">
    <source>
    </source>
</evidence>
<evidence type="ECO:0000305" key="5"/>
<protein>
    <recommendedName>
        <fullName>Cysteine-rich PDZ-binding protein</fullName>
    </recommendedName>
    <alternativeName>
        <fullName>Cysteine-rich interactor of PDZ three</fullName>
        <shortName>Cysteine-rich interactor of PDZ3</shortName>
    </alternativeName>
</protein>